<reference key="1">
    <citation type="journal article" date="1996" name="J. Biol. Chem.">
        <title>Molecular cloning and expression in different microbes of the DNA encoding Pseudomonas putida U phenylacetyl-CoA ligase. Use of this gene to improve the rate of benzylpenicillin biosynthesis in Penicillium chrysogenum.</title>
        <authorList>
            <person name="Minambres B."/>
            <person name="Martinez-Blanco H."/>
            <person name="Olivera E.R."/>
            <person name="Garcia B."/>
            <person name="Diez B."/>
            <person name="Barredo J.L."/>
            <person name="Moreno M.A."/>
            <person name="Schleissner C."/>
            <person name="Salto F."/>
            <person name="Luengo J.M."/>
        </authorList>
    </citation>
    <scope>NUCLEOTIDE SEQUENCE [GENOMIC DNA]</scope>
    <scope>FUNCTION IN PHENYLACETATE CATABOLISM</scope>
    <scope>PATHWAY</scope>
    <source>
        <strain>U</strain>
    </source>
</reference>
<reference key="2">
    <citation type="journal article" date="1998" name="Proc. Natl. Acad. Sci. U.S.A.">
        <title>Molecular characterization of the phenylacetic acid catabolic pathway in Pseudomonas putida U: the phenylacetyl-CoA catabolon.</title>
        <authorList>
            <person name="Olivera E.R."/>
            <person name="Minambres B."/>
            <person name="Garcia B."/>
            <person name="Muniz C."/>
            <person name="Moreno M.A."/>
            <person name="Ferrandez A."/>
            <person name="Diaz E."/>
            <person name="Garcia J.L."/>
            <person name="Luengo J.M."/>
        </authorList>
    </citation>
    <scope>NUCLEOTIDE SEQUENCE [GENOMIC DNA]</scope>
    <scope>FUNCTION IN PHENYLACETATE CATABOLISM</scope>
    <scope>PATHWAY</scope>
    <scope>INDUCTION</scope>
    <scope>DISRUPTION PHENOTYPE</scope>
    <source>
        <strain>U</strain>
    </source>
</reference>
<reference key="3">
    <citation type="journal article" date="1990" name="J. Biol. Chem.">
        <title>Purification and biochemical characterization of phenylacetyl-CoA ligase from Pseudomonas putida. A specific enzyme for the catabolism of phenylacetic acid.</title>
        <authorList>
            <person name="Martinez-Blanco H."/>
            <person name="Reglero A."/>
            <person name="Rodriguez-Aparicio L.B."/>
            <person name="Luengo J.M."/>
        </authorList>
    </citation>
    <scope>FUNCTION AS A PHENYLACETYL-COA LIGASE</scope>
    <scope>CATALYTIC ACTIVITY</scope>
    <scope>BIOPHYSICOCHEMICAL PROPERTIES</scope>
    <scope>SUBSTRATE SPECIFICITY</scope>
    <scope>ACTIVITY REGULATION</scope>
    <scope>INDUCTION</scope>
    <source>
        <strain>U</strain>
    </source>
</reference>
<accession>O33469</accession>
<gene>
    <name type="primary">paaK</name>
    <name evidence="11" type="synonym">paaF</name>
    <name evidence="6" type="synonym">pcl</name>
    <name evidence="7" type="synonym">phaE</name>
</gene>
<dbReference type="EC" id="6.2.1.30" evidence="2"/>
<dbReference type="EMBL" id="AF029714">
    <property type="protein sequence ID" value="AAC24333.2"/>
    <property type="molecule type" value="Genomic_DNA"/>
</dbReference>
<dbReference type="RefSeq" id="WP_059394932.1">
    <property type="nucleotide sequence ID" value="NZ_QLLF01000010.1"/>
</dbReference>
<dbReference type="SMR" id="O33469"/>
<dbReference type="KEGG" id="ag:AAC24333"/>
<dbReference type="UniPathway" id="UPA00930"/>
<dbReference type="GO" id="GO:0005524">
    <property type="term" value="F:ATP binding"/>
    <property type="evidence" value="ECO:0000314"/>
    <property type="project" value="UniProtKB"/>
</dbReference>
<dbReference type="GO" id="GO:0047475">
    <property type="term" value="F:phenylacetate-CoA ligase activity"/>
    <property type="evidence" value="ECO:0000314"/>
    <property type="project" value="UniProtKB"/>
</dbReference>
<dbReference type="GO" id="GO:0010124">
    <property type="term" value="P:phenylacetate catabolic process"/>
    <property type="evidence" value="ECO:0000315"/>
    <property type="project" value="UniProtKB"/>
</dbReference>
<dbReference type="CDD" id="cd05913">
    <property type="entry name" value="PaaK"/>
    <property type="match status" value="1"/>
</dbReference>
<dbReference type="FunFam" id="3.30.300.30:FF:000019">
    <property type="entry name" value="Phenylacetate-coenzyme A ligase"/>
    <property type="match status" value="1"/>
</dbReference>
<dbReference type="FunFam" id="3.40.50.12780:FF:000016">
    <property type="entry name" value="Phenylacetate-coenzyme A ligase"/>
    <property type="match status" value="1"/>
</dbReference>
<dbReference type="Gene3D" id="3.30.300.30">
    <property type="match status" value="1"/>
</dbReference>
<dbReference type="Gene3D" id="3.40.50.12780">
    <property type="entry name" value="N-terminal domain of ligase-like"/>
    <property type="match status" value="1"/>
</dbReference>
<dbReference type="InterPro" id="IPR051414">
    <property type="entry name" value="Adenylate-forming_Reductase"/>
</dbReference>
<dbReference type="InterPro" id="IPR045851">
    <property type="entry name" value="AMP-bd_C_sf"/>
</dbReference>
<dbReference type="InterPro" id="IPR028154">
    <property type="entry name" value="AMP-dep_Lig_C"/>
</dbReference>
<dbReference type="InterPro" id="IPR000873">
    <property type="entry name" value="AMP-dep_synth/lig_dom"/>
</dbReference>
<dbReference type="InterPro" id="IPR042099">
    <property type="entry name" value="ANL_N_sf"/>
</dbReference>
<dbReference type="InterPro" id="IPR049623">
    <property type="entry name" value="PA_CoA_lig_proteobact_actino"/>
</dbReference>
<dbReference type="InterPro" id="IPR011880">
    <property type="entry name" value="PA_CoA_ligase"/>
</dbReference>
<dbReference type="NCBIfam" id="TIGR02155">
    <property type="entry name" value="PA_CoA_ligase"/>
    <property type="match status" value="1"/>
</dbReference>
<dbReference type="PANTHER" id="PTHR43439">
    <property type="entry name" value="PHENYLACETATE-COENZYME A LIGASE"/>
    <property type="match status" value="1"/>
</dbReference>
<dbReference type="PANTHER" id="PTHR43439:SF1">
    <property type="entry name" value="PHENYLACETATE-COENZYME A LIGASE"/>
    <property type="match status" value="1"/>
</dbReference>
<dbReference type="Pfam" id="PF00501">
    <property type="entry name" value="AMP-binding"/>
    <property type="match status" value="1"/>
</dbReference>
<dbReference type="Pfam" id="PF14535">
    <property type="entry name" value="AMP-binding_C_2"/>
    <property type="match status" value="1"/>
</dbReference>
<dbReference type="PIRSF" id="PIRSF006444">
    <property type="entry name" value="PaaK"/>
    <property type="match status" value="1"/>
</dbReference>
<dbReference type="SUPFAM" id="SSF56801">
    <property type="entry name" value="Acetyl-CoA synthetase-like"/>
    <property type="match status" value="1"/>
</dbReference>
<name>PAAK_PSEPU</name>
<organism>
    <name type="scientific">Pseudomonas putida</name>
    <name type="common">Arthrobacter siderocapsulatus</name>
    <dbReference type="NCBI Taxonomy" id="303"/>
    <lineage>
        <taxon>Bacteria</taxon>
        <taxon>Pseudomonadati</taxon>
        <taxon>Pseudomonadota</taxon>
        <taxon>Gammaproteobacteria</taxon>
        <taxon>Pseudomonadales</taxon>
        <taxon>Pseudomonadaceae</taxon>
        <taxon>Pseudomonas</taxon>
    </lineage>
</organism>
<protein>
    <recommendedName>
        <fullName>Phenylacetate-coenzyme A ligase</fullName>
        <ecNumber evidence="2">6.2.1.30</ecNumber>
    </recommendedName>
    <alternativeName>
        <fullName evidence="5">Phenylacetyl-CoA ligase</fullName>
        <shortName evidence="5">PA-CoA ligase</shortName>
    </alternativeName>
</protein>
<sequence>MNMYHDADRALLDPMETASVDALRQHQLERLRWSLKHAYDNVPLYRQRFAECGAHPDDLTCLEDLAKFPFTGKNDLRDNYPYGMFAVPQEEVVRLHASSGTTGKPTVVGYTQNDINTWANVVARSIRAAGGRKGDKVHVSYGYGLFTGGLGAHYGAERLGCTVIPMSGGQTEKQVQLIRDFQPDIIMVTPSYMLNLADEIERQGIDPHDLKLRLGIFGAEPWTDELRRSIEQRLGINALDIYGLSEIMGPGVAMECIETKDGPTIWEDHFYPEIIDPVTGEVLPDGQLGELVFTSLSKEALPMVRYRTRDLTRLLPGTARPMRRIGKITGRSDDMLIIRGVNVFPTQIEEQVLKIKQLSEMYEIHLYRNGNLDSVEVHVELRAECQHLDEGQRKLVIGELSKQIKTYIGISTQVHLQACGTLKRSEGKACHVYDKRLAS</sequence>
<keyword id="KW-0436">Ligase</keyword>
<keyword id="KW-0547">Nucleotide-binding</keyword>
<proteinExistence type="evidence at protein level"/>
<feature type="chain" id="PRO_0000416775" description="Phenylacetate-coenzyme A ligase">
    <location>
        <begin position="1"/>
        <end position="439"/>
    </location>
</feature>
<comment type="function">
    <text evidence="2 3 4">Catalyzes the activation of phenylacetic acid (PA) to phenylacetyl-CoA (PA-CoA) (PubMed:2324116). Involved in the phenylalanine metabolism (PubMed:2324116, PubMed:8969218, PubMed:9600981). Can also use CTP and UTP as substrate (PubMed:2324116).</text>
</comment>
<comment type="catalytic activity">
    <reaction evidence="2">
        <text>2-phenylacetate + ATP + CoA = phenylacetyl-CoA + AMP + diphosphate</text>
        <dbReference type="Rhea" id="RHEA:20956"/>
        <dbReference type="ChEBI" id="CHEBI:18401"/>
        <dbReference type="ChEBI" id="CHEBI:30616"/>
        <dbReference type="ChEBI" id="CHEBI:33019"/>
        <dbReference type="ChEBI" id="CHEBI:57287"/>
        <dbReference type="ChEBI" id="CHEBI:57390"/>
        <dbReference type="ChEBI" id="CHEBI:456215"/>
        <dbReference type="EC" id="6.2.1.30"/>
    </reaction>
    <physiologicalReaction direction="left-to-right" evidence="2">
        <dbReference type="Rhea" id="RHEA:20957"/>
    </physiologicalReaction>
</comment>
<comment type="activity regulation">
    <text evidence="2">Inhibited by divalent cations (zinc, copper, mercury) and by the sulfhydryl reagents 5,5-dithiobis(2-nitrobenzoic acid), N-ethylmaleimide and p-chloromercuribenzoate.</text>
</comment>
<comment type="biophysicochemical properties">
    <kinetics>
        <KM evidence="2">9.7 mM for ATP (at 30 degrees Celsius and pH 8.2)</KM>
        <KM evidence="2">1 mM for CoA (at 30 degrees Celsius and pH 8.2)</KM>
        <KM evidence="2">16.5 mM for PA (at 30 degrees Celsius and pH 8.2)</KM>
    </kinetics>
    <phDependence>
        <text evidence="2">Optimum pH is 8.2.</text>
    </phDependence>
    <temperatureDependence>
        <text evidence="2">Optimum temperature is 30 degrees Celsius. The enzyme is heat stable.</text>
    </temperatureDependence>
</comment>
<comment type="pathway">
    <text evidence="9 10">Aromatic compound metabolism; phenylacetate degradation.</text>
</comment>
<comment type="subunit">
    <text evidence="1">Monomer.</text>
</comment>
<comment type="induction">
    <text evidence="2 4">Induced by phenylacetate.</text>
</comment>
<comment type="disruption phenotype">
    <text evidence="4">Mutant does not activate PA to PA-CoA but can completely catabolize all molecules that synthesize PA-CoA through other routes.</text>
</comment>
<comment type="similarity">
    <text evidence="8">Belongs to the phenylacetyl-CoA ligase family.</text>
</comment>
<evidence type="ECO:0000250" key="1">
    <source>
        <dbReference type="UniProtKB" id="Q9L9C1"/>
    </source>
</evidence>
<evidence type="ECO:0000269" key="2">
    <source>
    </source>
</evidence>
<evidence type="ECO:0000269" key="3">
    <source>
    </source>
</evidence>
<evidence type="ECO:0000269" key="4">
    <source>
    </source>
</evidence>
<evidence type="ECO:0000303" key="5">
    <source>
    </source>
</evidence>
<evidence type="ECO:0000303" key="6">
    <source>
    </source>
</evidence>
<evidence type="ECO:0000303" key="7">
    <source>
    </source>
</evidence>
<evidence type="ECO:0000305" key="8"/>
<evidence type="ECO:0000305" key="9">
    <source>
    </source>
</evidence>
<evidence type="ECO:0000305" key="10">
    <source>
    </source>
</evidence>
<evidence type="ECO:0000312" key="11">
    <source>
        <dbReference type="EMBL" id="AAC24333.2"/>
    </source>
</evidence>